<dbReference type="EMBL" id="AF099028">
    <property type="protein sequence ID" value="AAD12254.1"/>
    <property type="molecule type" value="mRNA"/>
</dbReference>
<dbReference type="EMBL" id="AE013599">
    <property type="protein sequence ID" value="AAF59046.2"/>
    <property type="molecule type" value="Genomic_DNA"/>
</dbReference>
<dbReference type="EMBL" id="AE013599">
    <property type="protein sequence ID" value="AAF59047.2"/>
    <property type="molecule type" value="Genomic_DNA"/>
</dbReference>
<dbReference type="EMBL" id="AE013599">
    <property type="protein sequence ID" value="AAX52723.1"/>
    <property type="molecule type" value="Genomic_DNA"/>
</dbReference>
<dbReference type="EMBL" id="AY061062">
    <property type="protein sequence ID" value="AAL28610.1"/>
    <property type="molecule type" value="mRNA"/>
</dbReference>
<dbReference type="EMBL" id="BT001762">
    <property type="protein sequence ID" value="AAN71517.1"/>
    <property type="molecule type" value="mRNA"/>
</dbReference>
<dbReference type="RefSeq" id="NP_001014513.1">
    <molecule id="Q8IGJ0-2"/>
    <property type="nucleotide sequence ID" value="NM_001014513.2"/>
</dbReference>
<dbReference type="RefSeq" id="NP_724710.1">
    <molecule id="Q8IGJ0-3"/>
    <property type="nucleotide sequence ID" value="NM_165624.2"/>
</dbReference>
<dbReference type="RefSeq" id="NP_724711.1">
    <molecule id="Q8IGJ0-1"/>
    <property type="nucleotide sequence ID" value="NM_165625.2"/>
</dbReference>
<dbReference type="BioGRID" id="61713">
    <property type="interactions" value="5"/>
</dbReference>
<dbReference type="FunCoup" id="Q8IGJ0">
    <property type="interactions" value="1129"/>
</dbReference>
<dbReference type="IntAct" id="Q8IGJ0">
    <property type="interactions" value="5"/>
</dbReference>
<dbReference type="STRING" id="7227.FBpp0100147"/>
<dbReference type="SwissPalm" id="Q8IGJ0"/>
<dbReference type="PaxDb" id="7227-FBpp0100147"/>
<dbReference type="DNASU" id="35865"/>
<dbReference type="EnsemblMetazoa" id="FBtr0088715">
    <molecule id="Q8IGJ0-3"/>
    <property type="protein sequence ID" value="FBpp0087794"/>
    <property type="gene ID" value="FBgn0086784"/>
</dbReference>
<dbReference type="EnsemblMetazoa" id="FBtr0088716">
    <molecule id="Q8IGJ0-1"/>
    <property type="protein sequence ID" value="FBpp0087795"/>
    <property type="gene ID" value="FBgn0086784"/>
</dbReference>
<dbReference type="EnsemblMetazoa" id="FBtr0301639">
    <molecule id="Q8IGJ0-2"/>
    <property type="protein sequence ID" value="FBpp0100147"/>
    <property type="gene ID" value="FBgn0086784"/>
</dbReference>
<dbReference type="GeneID" id="35865"/>
<dbReference type="KEGG" id="dme:Dmel_CG8739"/>
<dbReference type="AGR" id="FB:FBgn0086784"/>
<dbReference type="CTD" id="35865"/>
<dbReference type="FlyBase" id="FBgn0086784">
    <property type="gene designation" value="stmA"/>
</dbReference>
<dbReference type="VEuPathDB" id="VectorBase:FBgn0086784"/>
<dbReference type="eggNOG" id="KOG1877">
    <property type="taxonomic scope" value="Eukaryota"/>
</dbReference>
<dbReference type="GeneTree" id="ENSGT00390000002143"/>
<dbReference type="InParanoid" id="Q8IGJ0"/>
<dbReference type="OMA" id="VGTKYQT"/>
<dbReference type="OrthoDB" id="19232at2759"/>
<dbReference type="PhylomeDB" id="Q8IGJ0"/>
<dbReference type="BioGRID-ORCS" id="35865">
    <property type="hits" value="0 hits in 3 CRISPR screens"/>
</dbReference>
<dbReference type="GenomeRNAi" id="35865"/>
<dbReference type="PRO" id="PR:Q8IGJ0"/>
<dbReference type="Proteomes" id="UP000000803">
    <property type="component" value="Chromosome 2R"/>
</dbReference>
<dbReference type="Bgee" id="FBgn0086784">
    <property type="expression patterns" value="Expressed in lamina wide-field cell Lawf2 (Drosophila) in brain and 214 other cell types or tissues"/>
</dbReference>
<dbReference type="ExpressionAtlas" id="Q8IGJ0">
    <property type="expression patterns" value="baseline and differential"/>
</dbReference>
<dbReference type="GO" id="GO:0005886">
    <property type="term" value="C:plasma membrane"/>
    <property type="evidence" value="ECO:0000318"/>
    <property type="project" value="GO_Central"/>
</dbReference>
<dbReference type="GO" id="GO:0098793">
    <property type="term" value="C:presynapse"/>
    <property type="evidence" value="ECO:0007669"/>
    <property type="project" value="GOC"/>
</dbReference>
<dbReference type="GO" id="GO:0045202">
    <property type="term" value="C:synapse"/>
    <property type="evidence" value="ECO:0000314"/>
    <property type="project" value="FlyBase"/>
</dbReference>
<dbReference type="GO" id="GO:0150008">
    <property type="term" value="P:bulk synaptic vesicle endocytosis"/>
    <property type="evidence" value="ECO:0000315"/>
    <property type="project" value="FlyBase"/>
</dbReference>
<dbReference type="GO" id="GO:0007268">
    <property type="term" value="P:chemical synaptic transmission"/>
    <property type="evidence" value="ECO:0000315"/>
    <property type="project" value="FlyBase"/>
</dbReference>
<dbReference type="GO" id="GO:0007602">
    <property type="term" value="P:phototransduction"/>
    <property type="evidence" value="ECO:0000315"/>
    <property type="project" value="FlyBase"/>
</dbReference>
<dbReference type="GO" id="GO:0072659">
    <property type="term" value="P:protein localization to plasma membrane"/>
    <property type="evidence" value="ECO:0000318"/>
    <property type="project" value="GO_Central"/>
</dbReference>
<dbReference type="GO" id="GO:0048488">
    <property type="term" value="P:synaptic vesicle endocytosis"/>
    <property type="evidence" value="ECO:0000314"/>
    <property type="project" value="FlyBase"/>
</dbReference>
<dbReference type="GO" id="GO:0016079">
    <property type="term" value="P:synaptic vesicle exocytosis"/>
    <property type="evidence" value="ECO:0000315"/>
    <property type="project" value="FlyBase"/>
</dbReference>
<dbReference type="FunFam" id="1.25.10.10:FF:000422">
    <property type="entry name" value="Stambha A, isoform D"/>
    <property type="match status" value="1"/>
</dbReference>
<dbReference type="Gene3D" id="1.25.10.10">
    <property type="entry name" value="Leucine-rich Repeat Variant"/>
    <property type="match status" value="1"/>
</dbReference>
<dbReference type="InterPro" id="IPR011989">
    <property type="entry name" value="ARM-like"/>
</dbReference>
<dbReference type="InterPro" id="IPR016024">
    <property type="entry name" value="ARM-type_fold"/>
</dbReference>
<dbReference type="InterPro" id="IPR049152">
    <property type="entry name" value="EFR3-like_ARM"/>
</dbReference>
<dbReference type="InterPro" id="IPR051851">
    <property type="entry name" value="EFR3_Homologs"/>
</dbReference>
<dbReference type="PANTHER" id="PTHR12444">
    <property type="entry name" value="PROTEIN EFR3 HOMOLOG CMP44E"/>
    <property type="match status" value="1"/>
</dbReference>
<dbReference type="PANTHER" id="PTHR12444:SF8">
    <property type="entry name" value="PROTEIN EFR3 HOMOLOG CMP44E"/>
    <property type="match status" value="1"/>
</dbReference>
<dbReference type="Pfam" id="PF21052">
    <property type="entry name" value="EFR3_ARM"/>
    <property type="match status" value="1"/>
</dbReference>
<dbReference type="SUPFAM" id="SSF48371">
    <property type="entry name" value="ARM repeat"/>
    <property type="match status" value="1"/>
</dbReference>
<gene>
    <name type="primary">stmA</name>
    <name type="synonym">cmp44E</name>
    <name type="ORF">CG8739</name>
</gene>
<evidence type="ECO:0000255" key="1"/>
<evidence type="ECO:0000269" key="2">
    <source>
    </source>
</evidence>
<evidence type="ECO:0000303" key="3">
    <source>
    </source>
</evidence>
<evidence type="ECO:0000303" key="4">
    <source>
    </source>
</evidence>
<evidence type="ECO:0000305" key="5"/>
<organism>
    <name type="scientific">Drosophila melanogaster</name>
    <name type="common">Fruit fly</name>
    <dbReference type="NCBI Taxonomy" id="7227"/>
    <lineage>
        <taxon>Eukaryota</taxon>
        <taxon>Metazoa</taxon>
        <taxon>Ecdysozoa</taxon>
        <taxon>Arthropoda</taxon>
        <taxon>Hexapoda</taxon>
        <taxon>Insecta</taxon>
        <taxon>Pterygota</taxon>
        <taxon>Neoptera</taxon>
        <taxon>Endopterygota</taxon>
        <taxon>Diptera</taxon>
        <taxon>Brachycera</taxon>
        <taxon>Muscomorpha</taxon>
        <taxon>Ephydroidea</taxon>
        <taxon>Drosophilidae</taxon>
        <taxon>Drosophila</taxon>
        <taxon>Sophophora</taxon>
    </lineage>
</organism>
<sequence length="834" mass="93961">MALIRCCFEPPELPEFFDSFVQKCTDPSCCCGCCSALRPRYKRLVDNIFPVNPEDGLVKSNMEKLTFYSLSSPDKLDRIGEYLYQKATKDINRKRYKLAEIAMEAMDLLLQACHAQTTLNLFVESFLRMVQKLLEDSNPNLKIMATNSFVKFANINEDTPSYHRRYDFFISKFSSMCHSDAASMRDSLRLAGIKGLQGVIRKTVSDDLVENIWEAEHMEKIVPSLLFNMQFCVNVMFVKKNLLASGDLTPVEDATNVTPPALAEEVLRELVGRASFGHIRSVLKPLLTHLDRHELWVPNTFAIHTFRIVMISIQPQYSYTVVETLMQHLDNNFKSSPKTRTSLAVVLSKIIAIAAGESVGPSALDIINNLLTHLRTSVSTTSEITPEESQYQEALINALGEFANHHPDYQKIEIMLFIMNTVPDLSKKSKGDQMLQNILLKSLLKVGTQYSTVSFEKAFPASFLQPLLKMARAPHNPTRMVVMQILQALLDRHQNEQVLSSVSVKPYPALSQEPPSRSDIIFTHKYGANIMQALIDSMALSDRVDALTSSFNTAALLIVEMSCNETVQEFLLFILGIQQVACTVDTLGNVHKCSLHAISIGLLVLISRVSGINNLLEYAQKIVDARREEASHFLPPLLEPKKLAGKTFNLQLPHLAIDKLALGECLQNAGMDAQRLNTGAPYSLNQTDHPGHRHSWVESVSNQLTQRNSSADLTVYNGDVDSVSSSPGVCKKLLAPEFNFDAMKRALAEPTEAAKREQRERQMQIVRTFREGEFDDLMRRTEPKHDLIQNRLNELFNSLAVERQITQSDTKSSQLQASNEKPIYETNFPELFYY</sequence>
<accession>Q8IGJ0</accession>
<accession>A1Z7I7</accession>
<accession>A1Z7I8</accession>
<accession>A1Z7I9</accession>
<accession>O96648</accession>
<accession>Q7K2E8</accession>
<feature type="chain" id="PRO_0000270768" description="Protein EFR3 homolog cmp44E">
    <location>
        <begin position="1"/>
        <end position="834"/>
    </location>
</feature>
<feature type="transmembrane region" description="Helical" evidence="1">
    <location>
        <begin position="595"/>
        <end position="612"/>
    </location>
</feature>
<feature type="repeat" description="HEAT">
    <location>
        <begin position="120"/>
        <end position="156"/>
    </location>
</feature>
<feature type="splice variant" id="VSP_022220" description="In isoform A." evidence="3 4">
    <original>ALIRCCFEPPELPEFFDSFVQKCTDPSC</original>
    <variation>PG</variation>
    <location>
        <begin position="2"/>
        <end position="29"/>
    </location>
</feature>
<feature type="splice variant" id="VSP_022221" description="In isoform A and isoform B." evidence="3 4">
    <location>
        <begin position="231"/>
        <end position="244"/>
    </location>
</feature>
<feature type="sequence conflict" description="In Ref. 4; AAN71517." evidence="5" ref="4">
    <original>C</original>
    <variation>S</variation>
    <location>
        <position position="29"/>
    </location>
</feature>
<feature type="sequence conflict" description="In Ref. 4; AAN71517." evidence="5" ref="4">
    <original>L</original>
    <variation>P</variation>
    <location>
        <position position="83"/>
    </location>
</feature>
<feature type="sequence conflict" description="In Ref. 1; AAD12254." evidence="5" ref="1">
    <original>S</original>
    <variation>T</variation>
    <location>
        <position position="500"/>
    </location>
</feature>
<feature type="sequence conflict" description="In Ref. 4; AAN71517." evidence="5" ref="4">
    <original>M</original>
    <variation>I</variation>
    <location>
        <position position="671"/>
    </location>
</feature>
<comment type="function">
    <text evidence="2">An essential gene required for embryogenesis; required for cell viability.</text>
</comment>
<comment type="subcellular location">
    <subcellularLocation>
        <location evidence="5">Membrane</location>
        <topology evidence="5">Single-pass membrane protein</topology>
    </subcellularLocation>
</comment>
<comment type="alternative products">
    <event type="alternative splicing"/>
    <isoform>
        <id>Q8IGJ0-2</id>
        <name>C</name>
        <sequence type="displayed"/>
    </isoform>
    <isoform>
        <id>Q8IGJ0-1</id>
        <name>A</name>
        <sequence type="described" ref="VSP_022220 VSP_022221"/>
    </isoform>
    <isoform>
        <id>Q8IGJ0-3</id>
        <name>B</name>
        <sequence type="described" ref="VSP_022221"/>
    </isoform>
    <text>Named isoforms=3.</text>
</comment>
<comment type="tissue specificity">
    <text evidence="2">Expression during embryogenesis is ubiquitous with notably higher levels in the CNS and brain.</text>
</comment>
<comment type="similarity">
    <text evidence="5">Belongs to the EFR3 family.</text>
</comment>
<name>EFR3_DROME</name>
<proteinExistence type="evidence at transcript level"/>
<reference key="1">
    <citation type="journal article" date="1998" name="Dev. Genet.">
        <title>Clonal analysis of cmp44E, which encodes a conserved putative transmembrane protein, indicates a requirement for cell viability in Drosophila.</title>
        <authorList>
            <person name="Faulkner D.L."/>
            <person name="Dockendorff T.C."/>
            <person name="Jongens T.A."/>
        </authorList>
    </citation>
    <scope>NUCLEOTIDE SEQUENCE [MRNA] (ISOFORM A)</scope>
    <scope>FUNCTION</scope>
    <scope>TISSUE SPECIFICITY</scope>
</reference>
<reference key="2">
    <citation type="journal article" date="2000" name="Science">
        <title>The genome sequence of Drosophila melanogaster.</title>
        <authorList>
            <person name="Adams M.D."/>
            <person name="Celniker S.E."/>
            <person name="Holt R.A."/>
            <person name="Evans C.A."/>
            <person name="Gocayne J.D."/>
            <person name="Amanatides P.G."/>
            <person name="Scherer S.E."/>
            <person name="Li P.W."/>
            <person name="Hoskins R.A."/>
            <person name="Galle R.F."/>
            <person name="George R.A."/>
            <person name="Lewis S.E."/>
            <person name="Richards S."/>
            <person name="Ashburner M."/>
            <person name="Henderson S.N."/>
            <person name="Sutton G.G."/>
            <person name="Wortman J.R."/>
            <person name="Yandell M.D."/>
            <person name="Zhang Q."/>
            <person name="Chen L.X."/>
            <person name="Brandon R.C."/>
            <person name="Rogers Y.-H.C."/>
            <person name="Blazej R.G."/>
            <person name="Champe M."/>
            <person name="Pfeiffer B.D."/>
            <person name="Wan K.H."/>
            <person name="Doyle C."/>
            <person name="Baxter E.G."/>
            <person name="Helt G."/>
            <person name="Nelson C.R."/>
            <person name="Miklos G.L.G."/>
            <person name="Abril J.F."/>
            <person name="Agbayani A."/>
            <person name="An H.-J."/>
            <person name="Andrews-Pfannkoch C."/>
            <person name="Baldwin D."/>
            <person name="Ballew R.M."/>
            <person name="Basu A."/>
            <person name="Baxendale J."/>
            <person name="Bayraktaroglu L."/>
            <person name="Beasley E.M."/>
            <person name="Beeson K.Y."/>
            <person name="Benos P.V."/>
            <person name="Berman B.P."/>
            <person name="Bhandari D."/>
            <person name="Bolshakov S."/>
            <person name="Borkova D."/>
            <person name="Botchan M.R."/>
            <person name="Bouck J."/>
            <person name="Brokstein P."/>
            <person name="Brottier P."/>
            <person name="Burtis K.C."/>
            <person name="Busam D.A."/>
            <person name="Butler H."/>
            <person name="Cadieu E."/>
            <person name="Center A."/>
            <person name="Chandra I."/>
            <person name="Cherry J.M."/>
            <person name="Cawley S."/>
            <person name="Dahlke C."/>
            <person name="Davenport L.B."/>
            <person name="Davies P."/>
            <person name="de Pablos B."/>
            <person name="Delcher A."/>
            <person name="Deng Z."/>
            <person name="Mays A.D."/>
            <person name="Dew I."/>
            <person name="Dietz S.M."/>
            <person name="Dodson K."/>
            <person name="Doup L.E."/>
            <person name="Downes M."/>
            <person name="Dugan-Rocha S."/>
            <person name="Dunkov B.C."/>
            <person name="Dunn P."/>
            <person name="Durbin K.J."/>
            <person name="Evangelista C.C."/>
            <person name="Ferraz C."/>
            <person name="Ferriera S."/>
            <person name="Fleischmann W."/>
            <person name="Fosler C."/>
            <person name="Gabrielian A.E."/>
            <person name="Garg N.S."/>
            <person name="Gelbart W.M."/>
            <person name="Glasser K."/>
            <person name="Glodek A."/>
            <person name="Gong F."/>
            <person name="Gorrell J.H."/>
            <person name="Gu Z."/>
            <person name="Guan P."/>
            <person name="Harris M."/>
            <person name="Harris N.L."/>
            <person name="Harvey D.A."/>
            <person name="Heiman T.J."/>
            <person name="Hernandez J.R."/>
            <person name="Houck J."/>
            <person name="Hostin D."/>
            <person name="Houston K.A."/>
            <person name="Howland T.J."/>
            <person name="Wei M.-H."/>
            <person name="Ibegwam C."/>
            <person name="Jalali M."/>
            <person name="Kalush F."/>
            <person name="Karpen G.H."/>
            <person name="Ke Z."/>
            <person name="Kennison J.A."/>
            <person name="Ketchum K.A."/>
            <person name="Kimmel B.E."/>
            <person name="Kodira C.D."/>
            <person name="Kraft C.L."/>
            <person name="Kravitz S."/>
            <person name="Kulp D."/>
            <person name="Lai Z."/>
            <person name="Lasko P."/>
            <person name="Lei Y."/>
            <person name="Levitsky A.A."/>
            <person name="Li J.H."/>
            <person name="Li Z."/>
            <person name="Liang Y."/>
            <person name="Lin X."/>
            <person name="Liu X."/>
            <person name="Mattei B."/>
            <person name="McIntosh T.C."/>
            <person name="McLeod M.P."/>
            <person name="McPherson D."/>
            <person name="Merkulov G."/>
            <person name="Milshina N.V."/>
            <person name="Mobarry C."/>
            <person name="Morris J."/>
            <person name="Moshrefi A."/>
            <person name="Mount S.M."/>
            <person name="Moy M."/>
            <person name="Murphy B."/>
            <person name="Murphy L."/>
            <person name="Muzny D.M."/>
            <person name="Nelson D.L."/>
            <person name="Nelson D.R."/>
            <person name="Nelson K.A."/>
            <person name="Nixon K."/>
            <person name="Nusskern D.R."/>
            <person name="Pacleb J.M."/>
            <person name="Palazzolo M."/>
            <person name="Pittman G.S."/>
            <person name="Pan S."/>
            <person name="Pollard J."/>
            <person name="Puri V."/>
            <person name="Reese M.G."/>
            <person name="Reinert K."/>
            <person name="Remington K."/>
            <person name="Saunders R.D.C."/>
            <person name="Scheeler F."/>
            <person name="Shen H."/>
            <person name="Shue B.C."/>
            <person name="Siden-Kiamos I."/>
            <person name="Simpson M."/>
            <person name="Skupski M.P."/>
            <person name="Smith T.J."/>
            <person name="Spier E."/>
            <person name="Spradling A.C."/>
            <person name="Stapleton M."/>
            <person name="Strong R."/>
            <person name="Sun E."/>
            <person name="Svirskas R."/>
            <person name="Tector C."/>
            <person name="Turner R."/>
            <person name="Venter E."/>
            <person name="Wang A.H."/>
            <person name="Wang X."/>
            <person name="Wang Z.-Y."/>
            <person name="Wassarman D.A."/>
            <person name="Weinstock G.M."/>
            <person name="Weissenbach J."/>
            <person name="Williams S.M."/>
            <person name="Woodage T."/>
            <person name="Worley K.C."/>
            <person name="Wu D."/>
            <person name="Yang S."/>
            <person name="Yao Q.A."/>
            <person name="Ye J."/>
            <person name="Yeh R.-F."/>
            <person name="Zaveri J.S."/>
            <person name="Zhan M."/>
            <person name="Zhang G."/>
            <person name="Zhao Q."/>
            <person name="Zheng L."/>
            <person name="Zheng X.H."/>
            <person name="Zhong F.N."/>
            <person name="Zhong W."/>
            <person name="Zhou X."/>
            <person name="Zhu S.C."/>
            <person name="Zhu X."/>
            <person name="Smith H.O."/>
            <person name="Gibbs R.A."/>
            <person name="Myers E.W."/>
            <person name="Rubin G.M."/>
            <person name="Venter J.C."/>
        </authorList>
    </citation>
    <scope>NUCLEOTIDE SEQUENCE [LARGE SCALE GENOMIC DNA]</scope>
    <source>
        <strain>Berkeley</strain>
    </source>
</reference>
<reference key="3">
    <citation type="journal article" date="2002" name="Genome Biol.">
        <title>Annotation of the Drosophila melanogaster euchromatic genome: a systematic review.</title>
        <authorList>
            <person name="Misra S."/>
            <person name="Crosby M.A."/>
            <person name="Mungall C.J."/>
            <person name="Matthews B.B."/>
            <person name="Campbell K.S."/>
            <person name="Hradecky P."/>
            <person name="Huang Y."/>
            <person name="Kaminker J.S."/>
            <person name="Millburn G.H."/>
            <person name="Prochnik S.E."/>
            <person name="Smith C.D."/>
            <person name="Tupy J.L."/>
            <person name="Whitfield E.J."/>
            <person name="Bayraktaroglu L."/>
            <person name="Berman B.P."/>
            <person name="Bettencourt B.R."/>
            <person name="Celniker S.E."/>
            <person name="de Grey A.D.N.J."/>
            <person name="Drysdale R.A."/>
            <person name="Harris N.L."/>
            <person name="Richter J."/>
            <person name="Russo S."/>
            <person name="Schroeder A.J."/>
            <person name="Shu S.Q."/>
            <person name="Stapleton M."/>
            <person name="Yamada C."/>
            <person name="Ashburner M."/>
            <person name="Gelbart W.M."/>
            <person name="Rubin G.M."/>
            <person name="Lewis S.E."/>
        </authorList>
    </citation>
    <scope>GENOME REANNOTATION</scope>
    <scope>ALTERNATIVE SPLICING</scope>
    <source>
        <strain>Berkeley</strain>
    </source>
</reference>
<reference key="4">
    <citation type="journal article" date="2002" name="Genome Biol.">
        <title>A Drosophila full-length cDNA resource.</title>
        <authorList>
            <person name="Stapleton M."/>
            <person name="Carlson J.W."/>
            <person name="Brokstein P."/>
            <person name="Yu C."/>
            <person name="Champe M."/>
            <person name="George R.A."/>
            <person name="Guarin H."/>
            <person name="Kronmiller B."/>
            <person name="Pacleb J.M."/>
            <person name="Park S."/>
            <person name="Wan K.H."/>
            <person name="Rubin G.M."/>
            <person name="Celniker S.E."/>
        </authorList>
    </citation>
    <scope>NUCLEOTIDE SEQUENCE [LARGE SCALE MRNA] (ISOFORMS A AND C)</scope>
    <source>
        <strain>Berkeley</strain>
        <tissue>Embryo</tissue>
        <tissue>Head</tissue>
    </source>
</reference>
<keyword id="KW-0025">Alternative splicing</keyword>
<keyword id="KW-0472">Membrane</keyword>
<keyword id="KW-1185">Reference proteome</keyword>
<keyword id="KW-0812">Transmembrane</keyword>
<keyword id="KW-1133">Transmembrane helix</keyword>
<protein>
    <recommendedName>
        <fullName>Protein EFR3 homolog cmp44E</fullName>
    </recommendedName>
    <alternativeName>
        <fullName>Conserved membrane protein at 44E</fullName>
    </alternativeName>
    <alternativeName>
        <fullName>Protein stambha A</fullName>
    </alternativeName>
</protein>